<evidence type="ECO:0000255" key="1">
    <source>
        <dbReference type="PROSITE-ProRule" id="PRU00407"/>
    </source>
</evidence>
<evidence type="ECO:0000255" key="2">
    <source>
        <dbReference type="PROSITE-ProRule" id="PRU01189"/>
    </source>
</evidence>
<evidence type="ECO:0000305" key="3"/>
<name>NHR65_CAEEL</name>
<protein>
    <recommendedName>
        <fullName>Nuclear hormone receptor family member nhr-65</fullName>
    </recommendedName>
</protein>
<gene>
    <name type="primary">nhr-65</name>
    <name type="ORF">Y17D7A.3</name>
</gene>
<keyword id="KW-0025">Alternative splicing</keyword>
<keyword id="KW-0238">DNA-binding</keyword>
<keyword id="KW-0479">Metal-binding</keyword>
<keyword id="KW-0539">Nucleus</keyword>
<keyword id="KW-0675">Receptor</keyword>
<keyword id="KW-1185">Reference proteome</keyword>
<keyword id="KW-0804">Transcription</keyword>
<keyword id="KW-0805">Transcription regulation</keyword>
<keyword id="KW-0862">Zinc</keyword>
<keyword id="KW-0863">Zinc-finger</keyword>
<organism>
    <name type="scientific">Caenorhabditis elegans</name>
    <dbReference type="NCBI Taxonomy" id="6239"/>
    <lineage>
        <taxon>Eukaryota</taxon>
        <taxon>Metazoa</taxon>
        <taxon>Ecdysozoa</taxon>
        <taxon>Nematoda</taxon>
        <taxon>Chromadorea</taxon>
        <taxon>Rhabditida</taxon>
        <taxon>Rhabditina</taxon>
        <taxon>Rhabditomorpha</taxon>
        <taxon>Rhabditoidea</taxon>
        <taxon>Rhabditidae</taxon>
        <taxon>Peloderinae</taxon>
        <taxon>Caenorhabditis</taxon>
    </lineage>
</organism>
<accession>O45907</accession>
<accession>Q7YTK0</accession>
<accession>Q9GTE3</accession>
<comment type="function">
    <text>Orphan nuclear receptor.</text>
</comment>
<comment type="subcellular location">
    <subcellularLocation>
        <location evidence="1">Nucleus</location>
    </subcellularLocation>
</comment>
<comment type="alternative products">
    <event type="alternative splicing"/>
    <isoform>
        <id>O45907-1</id>
        <name>a</name>
        <sequence type="displayed"/>
    </isoform>
    <isoform>
        <id>O45907-2</id>
        <name>b</name>
        <sequence type="described" ref="VSP_009635"/>
    </isoform>
</comment>
<comment type="similarity">
    <text evidence="3">Belongs to the nuclear hormone receptor family.</text>
</comment>
<sequence length="401" mass="46799">MELEPCSSSPERCKVCGDTGNGMHFGAFTCRACAAFFRRAASRKFLRKCENHLIFALKCKNCRLQRCYEAGMSSENFQFCRDLIGAKGAIPKLKVPKSFEQTVGRPYFVLQCDPEVLFLRRNIIDCVPLLEKAEKLIEFGSESPVFSKNRLLKLAQGLQQFQDAKSNQVKFVQKMGQKEIMSFFETDFLCATKWFTYLDEFQFLDKNQQLTLMQGIWHVWSRLHKLAVSAMGRRRGICDKNTVMVSHQNEFAVCDLNEIEVDMSWCTNFSNEQMRYFLDTSHDSYVYQVMDEMLGLKPNDVELSYMMCQLCLQYAGQRFQGEILEFCEKMLGFLADDLHSYYVKQLRMPNYAARLAKLMKINNRIKVDMLKMRQRQEISRVFDIWTIDFSHPEFIQDANAC</sequence>
<proteinExistence type="evidence at transcript level"/>
<dbReference type="EMBL" id="AL021470">
    <property type="protein sequence ID" value="CAA16292.1"/>
    <property type="molecule type" value="Genomic_DNA"/>
</dbReference>
<dbReference type="EMBL" id="AL021470">
    <property type="protein sequence ID" value="CAE17952.1"/>
    <property type="molecule type" value="Genomic_DNA"/>
</dbReference>
<dbReference type="EMBL" id="AF273816">
    <property type="protein sequence ID" value="AAG15165.1"/>
    <property type="molecule type" value="mRNA"/>
</dbReference>
<dbReference type="PIR" id="T26479">
    <property type="entry name" value="T26479"/>
</dbReference>
<dbReference type="RefSeq" id="NP_001024219.1">
    <molecule id="O45907-1"/>
    <property type="nucleotide sequence ID" value="NM_001029048.7"/>
</dbReference>
<dbReference type="RefSeq" id="NP_001024220.1">
    <molecule id="O45907-2"/>
    <property type="nucleotide sequence ID" value="NM_001029049.6"/>
</dbReference>
<dbReference type="FunCoup" id="O45907">
    <property type="interactions" value="113"/>
</dbReference>
<dbReference type="STRING" id="6239.Y17D7A.3a.1"/>
<dbReference type="PaxDb" id="6239-Y17D7A.3a"/>
<dbReference type="EnsemblMetazoa" id="Y17D7A.3a.1">
    <molecule id="O45907-1"/>
    <property type="protein sequence ID" value="Y17D7A.3a.1"/>
    <property type="gene ID" value="WBGene00003655"/>
</dbReference>
<dbReference type="EnsemblMetazoa" id="Y17D7A.3b.1">
    <molecule id="O45907-2"/>
    <property type="protein sequence ID" value="Y17D7A.3b.1"/>
    <property type="gene ID" value="WBGene00003655"/>
</dbReference>
<dbReference type="GeneID" id="180230"/>
<dbReference type="KEGG" id="cel:CELE_Y17D7A.3"/>
<dbReference type="UCSC" id="Y17D7A.3a">
    <molecule id="O45907-1"/>
    <property type="organism name" value="c. elegans"/>
</dbReference>
<dbReference type="AGR" id="WB:WBGene00003655"/>
<dbReference type="CTD" id="180230"/>
<dbReference type="WormBase" id="Y17D7A.3a">
    <molecule id="O45907-1"/>
    <property type="protein sequence ID" value="CE16588"/>
    <property type="gene ID" value="WBGene00003655"/>
    <property type="gene designation" value="nhr-65"/>
</dbReference>
<dbReference type="WormBase" id="Y17D7A.3b">
    <molecule id="O45907-2"/>
    <property type="protein sequence ID" value="CE35061"/>
    <property type="gene ID" value="WBGene00003655"/>
    <property type="gene designation" value="nhr-65"/>
</dbReference>
<dbReference type="eggNOG" id="KOG3575">
    <property type="taxonomic scope" value="Eukaryota"/>
</dbReference>
<dbReference type="GeneTree" id="ENSGT00970000196183"/>
<dbReference type="InParanoid" id="O45907"/>
<dbReference type="OMA" id="HQNEFAV"/>
<dbReference type="OrthoDB" id="5819009at2759"/>
<dbReference type="PhylomeDB" id="O45907"/>
<dbReference type="PRO" id="PR:O45907"/>
<dbReference type="Proteomes" id="UP000001940">
    <property type="component" value="Chromosome V"/>
</dbReference>
<dbReference type="Bgee" id="WBGene00003655">
    <property type="expression patterns" value="Expressed in pharyngeal muscle cell (C elegans) and 4 other cell types or tissues"/>
</dbReference>
<dbReference type="GO" id="GO:0005634">
    <property type="term" value="C:nucleus"/>
    <property type="evidence" value="ECO:0007669"/>
    <property type="project" value="UniProtKB-SubCell"/>
</dbReference>
<dbReference type="GO" id="GO:0003700">
    <property type="term" value="F:DNA-binding transcription factor activity"/>
    <property type="evidence" value="ECO:0007669"/>
    <property type="project" value="InterPro"/>
</dbReference>
<dbReference type="GO" id="GO:0043565">
    <property type="term" value="F:sequence-specific DNA binding"/>
    <property type="evidence" value="ECO:0007669"/>
    <property type="project" value="InterPro"/>
</dbReference>
<dbReference type="GO" id="GO:0008270">
    <property type="term" value="F:zinc ion binding"/>
    <property type="evidence" value="ECO:0007669"/>
    <property type="project" value="UniProtKB-KW"/>
</dbReference>
<dbReference type="Gene3D" id="3.30.50.10">
    <property type="entry name" value="Erythroid Transcription Factor GATA-1, subunit A"/>
    <property type="match status" value="1"/>
</dbReference>
<dbReference type="Gene3D" id="1.10.565.10">
    <property type="entry name" value="Retinoid X Receptor"/>
    <property type="match status" value="1"/>
</dbReference>
<dbReference type="InterPro" id="IPR051152">
    <property type="entry name" value="C.elegans_Orphan_NR"/>
</dbReference>
<dbReference type="InterPro" id="IPR035500">
    <property type="entry name" value="NHR-like_dom_sf"/>
</dbReference>
<dbReference type="InterPro" id="IPR000536">
    <property type="entry name" value="Nucl_hrmn_rcpt_lig-bd"/>
</dbReference>
<dbReference type="InterPro" id="IPR001628">
    <property type="entry name" value="Znf_hrmn_rcpt"/>
</dbReference>
<dbReference type="InterPro" id="IPR013088">
    <property type="entry name" value="Znf_NHR/GATA"/>
</dbReference>
<dbReference type="PANTHER" id="PTHR45680">
    <property type="entry name" value="NUCLEAR HORMONE RECEPTOR FAMILY"/>
    <property type="match status" value="1"/>
</dbReference>
<dbReference type="PANTHER" id="PTHR45680:SF14">
    <property type="entry name" value="NUCLEAR HORMONE RECEPTOR FAMILY-RELATED"/>
    <property type="match status" value="1"/>
</dbReference>
<dbReference type="Pfam" id="PF00104">
    <property type="entry name" value="Hormone_recep"/>
    <property type="match status" value="1"/>
</dbReference>
<dbReference type="Pfam" id="PF00105">
    <property type="entry name" value="zf-C4"/>
    <property type="match status" value="1"/>
</dbReference>
<dbReference type="PRINTS" id="PR00047">
    <property type="entry name" value="STROIDFINGER"/>
</dbReference>
<dbReference type="SMART" id="SM00430">
    <property type="entry name" value="HOLI"/>
    <property type="match status" value="1"/>
</dbReference>
<dbReference type="SMART" id="SM00399">
    <property type="entry name" value="ZnF_C4"/>
    <property type="match status" value="1"/>
</dbReference>
<dbReference type="SUPFAM" id="SSF57716">
    <property type="entry name" value="Glucocorticoid receptor-like (DNA-binding domain)"/>
    <property type="match status" value="1"/>
</dbReference>
<dbReference type="SUPFAM" id="SSF48508">
    <property type="entry name" value="Nuclear receptor ligand-binding domain"/>
    <property type="match status" value="1"/>
</dbReference>
<dbReference type="PROSITE" id="PS51843">
    <property type="entry name" value="NR_LBD"/>
    <property type="match status" value="1"/>
</dbReference>
<dbReference type="PROSITE" id="PS00031">
    <property type="entry name" value="NUCLEAR_REC_DBD_1"/>
    <property type="match status" value="1"/>
</dbReference>
<dbReference type="PROSITE" id="PS51030">
    <property type="entry name" value="NUCLEAR_REC_DBD_2"/>
    <property type="match status" value="1"/>
</dbReference>
<feature type="chain" id="PRO_0000053793" description="Nuclear hormone receptor family member nhr-65">
    <location>
        <begin position="1"/>
        <end position="401"/>
    </location>
</feature>
<feature type="domain" description="NR LBD" evidence="2">
    <location>
        <begin position="132"/>
        <end position="398"/>
    </location>
</feature>
<feature type="DNA-binding region" description="Nuclear receptor" evidence="1">
    <location>
        <begin position="10"/>
        <end position="79"/>
    </location>
</feature>
<feature type="zinc finger region" description="NR C4-type" evidence="1">
    <location>
        <begin position="13"/>
        <end position="33"/>
    </location>
</feature>
<feature type="zinc finger region" description="NR C4-type" evidence="1">
    <location>
        <begin position="49"/>
        <end position="67"/>
    </location>
</feature>
<feature type="splice variant" id="VSP_009635" description="In isoform b." evidence="3">
    <original>VDMLKMRQRQEISRVFDIWTIDFSHPEFIQDANAC</original>
    <variation>ESVLKTRQRQQIAELFNVWTVDFSHPEFFRDA</variation>
    <location>
        <begin position="367"/>
        <end position="401"/>
    </location>
</feature>
<reference key="1">
    <citation type="journal article" date="1998" name="Science">
        <title>Genome sequence of the nematode C. elegans: a platform for investigating biology.</title>
        <authorList>
            <consortium name="The C. elegans sequencing consortium"/>
        </authorList>
    </citation>
    <scope>NUCLEOTIDE SEQUENCE [LARGE SCALE GENOMIC DNA]</scope>
    <scope>ALTERNATIVE SPLICING</scope>
    <source>
        <strain>Bristol N2</strain>
    </source>
</reference>
<reference key="2">
    <citation type="journal article" date="2005" name="J. Mol. Evol.">
        <title>Explosive lineage-specific expansion of the orphan nuclear receptor HNF4 in nematodes.</title>
        <authorList>
            <person name="Robinson-Rechavi M."/>
            <person name="Maina C.V."/>
            <person name="Gissendanner C.R."/>
            <person name="Laudet V."/>
            <person name="Sluder A."/>
        </authorList>
    </citation>
    <scope>NUCLEOTIDE SEQUENCE [MRNA] OF 128-401 (ISOFORM A)</scope>
</reference>